<gene>
    <name evidence="1" type="primary">ulaE</name>
    <name type="ordered locus">SeD_A4784</name>
</gene>
<protein>
    <recommendedName>
        <fullName evidence="1">L-ribulose-5-phosphate 3-epimerase UlaE</fullName>
        <ecNumber evidence="1">5.1.3.22</ecNumber>
    </recommendedName>
    <alternativeName>
        <fullName evidence="1">L-ascorbate utilization protein E</fullName>
    </alternativeName>
    <alternativeName>
        <fullName evidence="1">L-xylulose-5-phosphate 3-epimerase</fullName>
    </alternativeName>
</protein>
<proteinExistence type="inferred from homology"/>
<feature type="chain" id="PRO_1000188832" description="L-ribulose-5-phosphate 3-epimerase UlaE">
    <location>
        <begin position="1"/>
        <end position="284"/>
    </location>
</feature>
<organism>
    <name type="scientific">Salmonella dublin (strain CT_02021853)</name>
    <dbReference type="NCBI Taxonomy" id="439851"/>
    <lineage>
        <taxon>Bacteria</taxon>
        <taxon>Pseudomonadati</taxon>
        <taxon>Pseudomonadota</taxon>
        <taxon>Gammaproteobacteria</taxon>
        <taxon>Enterobacterales</taxon>
        <taxon>Enterobacteriaceae</taxon>
        <taxon>Salmonella</taxon>
    </lineage>
</organism>
<evidence type="ECO:0000255" key="1">
    <source>
        <dbReference type="HAMAP-Rule" id="MF_01951"/>
    </source>
</evidence>
<comment type="function">
    <text evidence="1">Catalyzes the isomerization of L-xylulose-5-phosphate to L-ribulose-5-phosphate. Is involved in the anaerobic L-ascorbate utilization.</text>
</comment>
<comment type="catalytic activity">
    <reaction evidence="1">
        <text>L-ribulose 5-phosphate = L-xylulose 5-phosphate</text>
        <dbReference type="Rhea" id="RHEA:18497"/>
        <dbReference type="ChEBI" id="CHEBI:57829"/>
        <dbReference type="ChEBI" id="CHEBI:58226"/>
        <dbReference type="EC" id="5.1.3.22"/>
    </reaction>
</comment>
<comment type="pathway">
    <text evidence="1">Cofactor degradation; L-ascorbate degradation; D-xylulose 5-phosphate from L-ascorbate: step 3/4.</text>
</comment>
<comment type="induction">
    <text evidence="1">Induced by L-ascorbate. Repressed by UlaR.</text>
</comment>
<comment type="similarity">
    <text evidence="1">Belongs to the L-ribulose-5-phosphate 3-epimerase family.</text>
</comment>
<keyword id="KW-0413">Isomerase</keyword>
<dbReference type="EC" id="5.1.3.22" evidence="1"/>
<dbReference type="EMBL" id="CP001144">
    <property type="protein sequence ID" value="ACH76050.1"/>
    <property type="molecule type" value="Genomic_DNA"/>
</dbReference>
<dbReference type="RefSeq" id="WP_000949530.1">
    <property type="nucleotide sequence ID" value="NC_011205.1"/>
</dbReference>
<dbReference type="SMR" id="B5FS98"/>
<dbReference type="KEGG" id="sed:SeD_A4784"/>
<dbReference type="HOGENOM" id="CLU_082738_0_0_6"/>
<dbReference type="UniPathway" id="UPA00263">
    <property type="reaction ID" value="UER00379"/>
</dbReference>
<dbReference type="Proteomes" id="UP000008322">
    <property type="component" value="Chromosome"/>
</dbReference>
<dbReference type="GO" id="GO:0016861">
    <property type="term" value="F:intramolecular oxidoreductase activity, interconverting aldoses and ketoses"/>
    <property type="evidence" value="ECO:0007669"/>
    <property type="project" value="InterPro"/>
</dbReference>
<dbReference type="GO" id="GO:0034015">
    <property type="term" value="F:L-ribulose-5-phosphate 3-epimerase activity"/>
    <property type="evidence" value="ECO:0007669"/>
    <property type="project" value="UniProtKB-UniRule"/>
</dbReference>
<dbReference type="GO" id="GO:0019854">
    <property type="term" value="P:L-ascorbic acid catabolic process"/>
    <property type="evidence" value="ECO:0007669"/>
    <property type="project" value="UniProtKB-UniRule"/>
</dbReference>
<dbReference type="FunFam" id="3.20.20.150:FF:000003">
    <property type="entry name" value="L-ribulose-5-phosphate 3-epimerase UlaE"/>
    <property type="match status" value="1"/>
</dbReference>
<dbReference type="Gene3D" id="3.20.20.150">
    <property type="entry name" value="Divalent-metal-dependent TIM barrel enzymes"/>
    <property type="match status" value="1"/>
</dbReference>
<dbReference type="HAMAP" id="MF_01951">
    <property type="entry name" value="UlaE"/>
    <property type="match status" value="1"/>
</dbReference>
<dbReference type="InterPro" id="IPR004560">
    <property type="entry name" value="L-Ru-5P_3-Epase"/>
</dbReference>
<dbReference type="InterPro" id="IPR023492">
    <property type="entry name" value="L-Ru-5P_3-Epase_Enterobacteria"/>
</dbReference>
<dbReference type="InterPro" id="IPR050417">
    <property type="entry name" value="Sugar_Epim/Isomerase"/>
</dbReference>
<dbReference type="InterPro" id="IPR036237">
    <property type="entry name" value="Xyl_isomerase-like_sf"/>
</dbReference>
<dbReference type="InterPro" id="IPR013022">
    <property type="entry name" value="Xyl_isomerase-like_TIM-brl"/>
</dbReference>
<dbReference type="NCBIfam" id="TIGR00542">
    <property type="entry name" value="hxl6Piso_put"/>
    <property type="match status" value="1"/>
</dbReference>
<dbReference type="NCBIfam" id="NF009688">
    <property type="entry name" value="PRK13209.1"/>
    <property type="match status" value="1"/>
</dbReference>
<dbReference type="NCBIfam" id="NF009689">
    <property type="entry name" value="PRK13210.1"/>
    <property type="match status" value="1"/>
</dbReference>
<dbReference type="PANTHER" id="PTHR43489">
    <property type="entry name" value="ISOMERASE"/>
    <property type="match status" value="1"/>
</dbReference>
<dbReference type="PANTHER" id="PTHR43489:SF8">
    <property type="entry name" value="L-RIBULOSE-5-PHOSPHATE 3-EPIMERASE ULAE"/>
    <property type="match status" value="1"/>
</dbReference>
<dbReference type="Pfam" id="PF01261">
    <property type="entry name" value="AP_endonuc_2"/>
    <property type="match status" value="1"/>
</dbReference>
<dbReference type="SUPFAM" id="SSF51658">
    <property type="entry name" value="Xylose isomerase-like"/>
    <property type="match status" value="1"/>
</dbReference>
<name>ULAE_SALDC</name>
<reference key="1">
    <citation type="journal article" date="2011" name="J. Bacteriol.">
        <title>Comparative genomics of 28 Salmonella enterica isolates: evidence for CRISPR-mediated adaptive sublineage evolution.</title>
        <authorList>
            <person name="Fricke W.F."/>
            <person name="Mammel M.K."/>
            <person name="McDermott P.F."/>
            <person name="Tartera C."/>
            <person name="White D.G."/>
            <person name="Leclerc J.E."/>
            <person name="Ravel J."/>
            <person name="Cebula T.A."/>
        </authorList>
    </citation>
    <scope>NUCLEOTIDE SEQUENCE [LARGE SCALE GENOMIC DNA]</scope>
    <source>
        <strain>CT_02021853</strain>
    </source>
</reference>
<accession>B5FS98</accession>
<sequence>MLSKQIPLGIYEKALPAGECWLERLRLAKTLGFDFVEMSVDETDARLARLDWSREQRLALVSAVAETGVRVPSMCLSAHRRFPLGSEDDAVRAQGLEIMRKAIQFAQDVGIRVIQLAGYDVYYQQANDETRCRFRDGLKESVDMASRAQVTLAMEIMDYPLMNSISKALGYAHYLNNPWFQLYPDIGNLSAWDNDVQMELQAGIGHIVAVHVKDTKPGVFKNVPFGEGVVDFERCFETLKQSGYCGPYLIEMWSETAENPAAEVAKARDWVKARMASAGLVEAA</sequence>